<gene>
    <name evidence="1" type="primary">petB</name>
</gene>
<organism>
    <name type="scientific">Citrus sinensis</name>
    <name type="common">Sweet orange</name>
    <name type="synonym">Citrus aurantium var. sinensis</name>
    <dbReference type="NCBI Taxonomy" id="2711"/>
    <lineage>
        <taxon>Eukaryota</taxon>
        <taxon>Viridiplantae</taxon>
        <taxon>Streptophyta</taxon>
        <taxon>Embryophyta</taxon>
        <taxon>Tracheophyta</taxon>
        <taxon>Spermatophyta</taxon>
        <taxon>Magnoliopsida</taxon>
        <taxon>eudicotyledons</taxon>
        <taxon>Gunneridae</taxon>
        <taxon>Pentapetalae</taxon>
        <taxon>rosids</taxon>
        <taxon>malvids</taxon>
        <taxon>Sapindales</taxon>
        <taxon>Rutaceae</taxon>
        <taxon>Aurantioideae</taxon>
        <taxon>Citrus</taxon>
    </lineage>
</organism>
<geneLocation type="chloroplast"/>
<proteinExistence type="inferred from homology"/>
<reference key="1">
    <citation type="journal article" date="2006" name="BMC Plant Biol.">
        <title>The complete chloroplast genome sequence of Citrus sinensis (L.) Osbeck var 'Ridge Pineapple': organization and phylogenetic relationships to other angiosperms.</title>
        <authorList>
            <person name="Bausher M.G."/>
            <person name="Singh N.D."/>
            <person name="Lee S.-B."/>
            <person name="Jansen R.K."/>
            <person name="Daniell H."/>
        </authorList>
    </citation>
    <scope>NUCLEOTIDE SEQUENCE [LARGE SCALE GENOMIC DNA]</scope>
    <source>
        <strain>cv. Osbeck var. Ridge Pineapple</strain>
    </source>
</reference>
<accession>Q09ME7</accession>
<comment type="function">
    <text evidence="1">Component of the cytochrome b6-f complex, which mediates electron transfer between photosystem II (PSII) and photosystem I (PSI), cyclic electron flow around PSI, and state transitions.</text>
</comment>
<comment type="cofactor">
    <cofactor evidence="1">
        <name>heme b</name>
        <dbReference type="ChEBI" id="CHEBI:60344"/>
    </cofactor>
    <text evidence="1">Binds 2 heme b groups non-covalently with two histidine residues as axial ligands.</text>
</comment>
<comment type="cofactor">
    <cofactor evidence="1">
        <name>heme c</name>
        <dbReference type="ChEBI" id="CHEBI:61717"/>
    </cofactor>
    <text evidence="1">Binds one heme group covalently by a single cysteine link with no axial amino acid ligand. This heme was named heme ci.</text>
</comment>
<comment type="subunit">
    <text evidence="1">The 4 large subunits of the cytochrome b6-f complex are cytochrome b6, subunit IV (17 kDa polypeptide, PetD), cytochrome f and the Rieske protein, while the 4 small subunits are PetG, PetL, PetM and PetN. The complex functions as a dimer.</text>
</comment>
<comment type="subcellular location">
    <subcellularLocation>
        <location evidence="1">Plastid</location>
        <location evidence="1">Chloroplast thylakoid membrane</location>
        <topology evidence="1">Multi-pass membrane protein</topology>
    </subcellularLocation>
</comment>
<comment type="miscellaneous">
    <text evidence="1">Heme 1 (or BH or b566) is high-potential and absorbs at about 566 nm, and heme 2 (or BL or b562) is low-potential and absorbs at about 562 nm.</text>
</comment>
<comment type="similarity">
    <text evidence="1">Belongs to the cytochrome b family. PetB subfamily.</text>
</comment>
<comment type="sequence caution" evidence="2">
    <conflict type="erroneous gene model prediction">
        <sequence resource="EMBL-CDS" id="ABI49049"/>
    </conflict>
    <text>The proposed translation is equivalent to the unspliced form that is know to occur in some monocots.</text>
</comment>
<name>CYB6_CITSI</name>
<sequence>MSKVYDWFEERLEIQAIADDITSKYVPPHVNIFYCLGGITLTCFLVQVATGFAMTFYYRPTVTEAFASVQYIMTEVNFGWLIRSVHRWSASMMVLMTILHVFRVYLTGGFKKPRELTWVTGVVLAVLTASFGVTGYSLPWDQIGYWAVKIVTGVPEAIPVIGSPLVELLRGSASVGQSTLTRFYSLHTFVLPLLTAVFMLMHFLMIRKQGISGPL</sequence>
<protein>
    <recommendedName>
        <fullName evidence="1">Cytochrome b6</fullName>
    </recommendedName>
</protein>
<evidence type="ECO:0000255" key="1">
    <source>
        <dbReference type="HAMAP-Rule" id="MF_00633"/>
    </source>
</evidence>
<evidence type="ECO:0000305" key="2"/>
<dbReference type="EMBL" id="DQ864733">
    <property type="protein sequence ID" value="ABI49049.1"/>
    <property type="status" value="ALT_SEQ"/>
    <property type="molecule type" value="Genomic_DNA"/>
</dbReference>
<dbReference type="RefSeq" id="YP_740506.1">
    <property type="nucleotide sequence ID" value="NC_008334.1"/>
</dbReference>
<dbReference type="SMR" id="Q09ME7"/>
<dbReference type="GeneID" id="4271129"/>
<dbReference type="KEGG" id="cit:4271129"/>
<dbReference type="OrthoDB" id="130186at71240"/>
<dbReference type="GO" id="GO:0009535">
    <property type="term" value="C:chloroplast thylakoid membrane"/>
    <property type="evidence" value="ECO:0007669"/>
    <property type="project" value="UniProtKB-SubCell"/>
</dbReference>
<dbReference type="GO" id="GO:0045158">
    <property type="term" value="F:electron transporter, transferring electrons within cytochrome b6/f complex of photosystem II activity"/>
    <property type="evidence" value="ECO:0007669"/>
    <property type="project" value="UniProtKB-UniRule"/>
</dbReference>
<dbReference type="GO" id="GO:0046872">
    <property type="term" value="F:metal ion binding"/>
    <property type="evidence" value="ECO:0007669"/>
    <property type="project" value="UniProtKB-KW"/>
</dbReference>
<dbReference type="GO" id="GO:0016491">
    <property type="term" value="F:oxidoreductase activity"/>
    <property type="evidence" value="ECO:0007669"/>
    <property type="project" value="InterPro"/>
</dbReference>
<dbReference type="GO" id="GO:0015979">
    <property type="term" value="P:photosynthesis"/>
    <property type="evidence" value="ECO:0007669"/>
    <property type="project" value="UniProtKB-UniRule"/>
</dbReference>
<dbReference type="GO" id="GO:0022904">
    <property type="term" value="P:respiratory electron transport chain"/>
    <property type="evidence" value="ECO:0007669"/>
    <property type="project" value="InterPro"/>
</dbReference>
<dbReference type="CDD" id="cd00284">
    <property type="entry name" value="Cytochrome_b_N"/>
    <property type="match status" value="1"/>
</dbReference>
<dbReference type="FunFam" id="1.20.810.10:FF:000001">
    <property type="entry name" value="Cytochrome b6"/>
    <property type="match status" value="1"/>
</dbReference>
<dbReference type="Gene3D" id="1.20.810.10">
    <property type="entry name" value="Cytochrome Bc1 Complex, Chain C"/>
    <property type="match status" value="1"/>
</dbReference>
<dbReference type="HAMAP" id="MF_00633">
    <property type="entry name" value="Cytb6_f_cytb6"/>
    <property type="match status" value="1"/>
</dbReference>
<dbReference type="InterPro" id="IPR005797">
    <property type="entry name" value="Cyt_b/b6_N"/>
</dbReference>
<dbReference type="InterPro" id="IPR023530">
    <property type="entry name" value="Cyt_B6_PetB"/>
</dbReference>
<dbReference type="InterPro" id="IPR027387">
    <property type="entry name" value="Cytb/b6-like_sf"/>
</dbReference>
<dbReference type="InterPro" id="IPR048259">
    <property type="entry name" value="Cytochrome_b_N_euk/bac"/>
</dbReference>
<dbReference type="InterPro" id="IPR016174">
    <property type="entry name" value="Di-haem_cyt_TM"/>
</dbReference>
<dbReference type="NCBIfam" id="NF002990">
    <property type="entry name" value="PRK03735.1"/>
    <property type="match status" value="1"/>
</dbReference>
<dbReference type="PANTHER" id="PTHR19271">
    <property type="entry name" value="CYTOCHROME B"/>
    <property type="match status" value="1"/>
</dbReference>
<dbReference type="PANTHER" id="PTHR19271:SF16">
    <property type="entry name" value="CYTOCHROME B"/>
    <property type="match status" value="1"/>
</dbReference>
<dbReference type="Pfam" id="PF00033">
    <property type="entry name" value="Cytochrome_B"/>
    <property type="match status" value="1"/>
</dbReference>
<dbReference type="PIRSF" id="PIRSF000032">
    <property type="entry name" value="Cytochrome_b6"/>
    <property type="match status" value="1"/>
</dbReference>
<dbReference type="SUPFAM" id="SSF81342">
    <property type="entry name" value="Transmembrane di-heme cytochromes"/>
    <property type="match status" value="1"/>
</dbReference>
<dbReference type="PROSITE" id="PS51002">
    <property type="entry name" value="CYTB_NTER"/>
    <property type="match status" value="1"/>
</dbReference>
<feature type="chain" id="PRO_0000275310" description="Cytochrome b6">
    <location>
        <begin position="1"/>
        <end position="215"/>
    </location>
</feature>
<feature type="transmembrane region" description="Helical" evidence="1">
    <location>
        <begin position="32"/>
        <end position="52"/>
    </location>
</feature>
<feature type="transmembrane region" description="Helical" evidence="1">
    <location>
        <begin position="90"/>
        <end position="110"/>
    </location>
</feature>
<feature type="transmembrane region" description="Helical" evidence="1">
    <location>
        <begin position="116"/>
        <end position="136"/>
    </location>
</feature>
<feature type="transmembrane region" description="Helical" evidence="1">
    <location>
        <begin position="186"/>
        <end position="206"/>
    </location>
</feature>
<feature type="binding site" description="covalent" evidence="1">
    <location>
        <position position="35"/>
    </location>
    <ligand>
        <name>heme c</name>
        <dbReference type="ChEBI" id="CHEBI:61717"/>
    </ligand>
</feature>
<feature type="binding site" description="axial binding residue" evidence="1">
    <location>
        <position position="86"/>
    </location>
    <ligand>
        <name>heme b</name>
        <dbReference type="ChEBI" id="CHEBI:60344"/>
        <label>2</label>
    </ligand>
    <ligandPart>
        <name>Fe</name>
        <dbReference type="ChEBI" id="CHEBI:18248"/>
    </ligandPart>
</feature>
<feature type="binding site" description="axial binding residue" evidence="1">
    <location>
        <position position="100"/>
    </location>
    <ligand>
        <name>heme b</name>
        <dbReference type="ChEBI" id="CHEBI:60344"/>
        <label>1</label>
    </ligand>
    <ligandPart>
        <name>Fe</name>
        <dbReference type="ChEBI" id="CHEBI:18248"/>
    </ligandPart>
</feature>
<feature type="binding site" description="axial binding residue" evidence="1">
    <location>
        <position position="187"/>
    </location>
    <ligand>
        <name>heme b</name>
        <dbReference type="ChEBI" id="CHEBI:60344"/>
        <label>2</label>
    </ligand>
    <ligandPart>
        <name>Fe</name>
        <dbReference type="ChEBI" id="CHEBI:18248"/>
    </ligandPart>
</feature>
<feature type="binding site" description="axial binding residue" evidence="1">
    <location>
        <position position="202"/>
    </location>
    <ligand>
        <name>heme b</name>
        <dbReference type="ChEBI" id="CHEBI:60344"/>
        <label>1</label>
    </ligand>
    <ligandPart>
        <name>Fe</name>
        <dbReference type="ChEBI" id="CHEBI:18248"/>
    </ligandPart>
</feature>
<keyword id="KW-0150">Chloroplast</keyword>
<keyword id="KW-0249">Electron transport</keyword>
<keyword id="KW-0349">Heme</keyword>
<keyword id="KW-0408">Iron</keyword>
<keyword id="KW-0472">Membrane</keyword>
<keyword id="KW-0479">Metal-binding</keyword>
<keyword id="KW-0602">Photosynthesis</keyword>
<keyword id="KW-0934">Plastid</keyword>
<keyword id="KW-0793">Thylakoid</keyword>
<keyword id="KW-0812">Transmembrane</keyword>
<keyword id="KW-1133">Transmembrane helix</keyword>
<keyword id="KW-0813">Transport</keyword>